<gene>
    <name type="primary">SPS1</name>
    <name type="ordered locus">Os01g0919400</name>
    <name type="ordered locus">LOC_Os01g69030</name>
    <name type="ORF">P0678F11.16</name>
</gene>
<organism>
    <name type="scientific">Oryza sativa subsp. japonica</name>
    <name type="common">Rice</name>
    <dbReference type="NCBI Taxonomy" id="39947"/>
    <lineage>
        <taxon>Eukaryota</taxon>
        <taxon>Viridiplantae</taxon>
        <taxon>Streptophyta</taxon>
        <taxon>Embryophyta</taxon>
        <taxon>Tracheophyta</taxon>
        <taxon>Spermatophyta</taxon>
        <taxon>Magnoliopsida</taxon>
        <taxon>Liliopsida</taxon>
        <taxon>Poales</taxon>
        <taxon>Poaceae</taxon>
        <taxon>BOP clade</taxon>
        <taxon>Oryzoideae</taxon>
        <taxon>Oryzeae</taxon>
        <taxon>Oryzinae</taxon>
        <taxon>Oryza</taxon>
        <taxon>Oryza sativa</taxon>
    </lineage>
</organism>
<feature type="chain" id="PRO_0000204672" description="Probable sucrose-phosphate synthase 1">
    <location>
        <begin position="1"/>
        <end position="1084"/>
    </location>
</feature>
<feature type="region of interest" description="Disordered" evidence="2">
    <location>
        <begin position="25"/>
        <end position="61"/>
    </location>
</feature>
<feature type="compositionally biased region" description="Gly residues" evidence="2">
    <location>
        <begin position="25"/>
        <end position="46"/>
    </location>
</feature>
<feature type="compositionally biased region" description="Low complexity" evidence="2">
    <location>
        <begin position="48"/>
        <end position="61"/>
    </location>
</feature>
<feature type="sequence conflict" description="In Ref. 1; BAA08304." evidence="4" ref="1">
    <original>R</original>
    <variation>S</variation>
    <location>
        <position position="49"/>
    </location>
</feature>
<feature type="sequence conflict" description="In Ref. 1; BAA08304." evidence="4" ref="1">
    <original>AAGAA</original>
    <variation>TTGTT</variation>
    <location>
        <begin position="52"/>
        <end position="56"/>
    </location>
</feature>
<feature type="sequence conflict" description="In Ref. 1; BAA08304." evidence="4" ref="1">
    <original>I</original>
    <variation>M</variation>
    <location>
        <position position="384"/>
    </location>
</feature>
<feature type="sequence conflict" description="In Ref. 1; BAA08304." evidence="4" ref="1">
    <original>M</original>
    <variation>S</variation>
    <location>
        <position position="494"/>
    </location>
</feature>
<feature type="sequence conflict" description="In Ref. 1; BAA08304." evidence="4" ref="1">
    <original>L</original>
    <variation>W</variation>
    <location>
        <position position="497"/>
    </location>
</feature>
<feature type="sequence conflict" description="In Ref. 1; BAA08304." evidence="4" ref="1">
    <original>I</original>
    <variation>S</variation>
    <location>
        <position position="539"/>
    </location>
</feature>
<feature type="sequence conflict" description="In Ref. 1; BAA08304." evidence="4" ref="1">
    <original>N</original>
    <variation>T</variation>
    <location>
        <position position="542"/>
    </location>
</feature>
<feature type="sequence conflict" description="In Ref. 1; BAA08304." evidence="4" ref="1">
    <original>E</original>
    <variation>G</variation>
    <location>
        <position position="548"/>
    </location>
</feature>
<feature type="sequence conflict" description="In Ref. 1; BAA08304." evidence="4" ref="1">
    <original>H</original>
    <variation>Y</variation>
    <location>
        <position position="578"/>
    </location>
</feature>
<feature type="sequence conflict" description="In Ref. 1; BAA08304." evidence="4" ref="1">
    <original>A</original>
    <variation>G</variation>
    <location>
        <position position="623"/>
    </location>
</feature>
<feature type="sequence conflict" description="In Ref. 1; BAA08304." evidence="4" ref="1">
    <original>D</original>
    <variation>E</variation>
    <location>
        <position position="767"/>
    </location>
</feature>
<feature type="sequence conflict" description="In Ref. 1; BAA08304." evidence="4" ref="1">
    <original>I</original>
    <variation>M</variation>
    <location>
        <position position="950"/>
    </location>
</feature>
<reference key="1">
    <citation type="journal article" date="1995" name="Plant Sci.">
        <title>Structure and RFLP mapping of a rice sucrose phosphate synthase (SPS) gene that is specifically expressed in the source organ.</title>
        <authorList>
            <person name="Sakamoto M."/>
            <person name="Satozawa T."/>
            <person name="Kishimoto N."/>
            <person name="Higo K."/>
            <person name="Shimada H."/>
            <person name="Fujimura T."/>
        </authorList>
    </citation>
    <scope>NUCLEOTIDE SEQUENCE [GENOMIC DNA]</scope>
    <source>
        <strain>cv. Nipponbare</strain>
    </source>
</reference>
<reference key="2">
    <citation type="journal article" date="2002" name="Nature">
        <title>The genome sequence and structure of rice chromosome 1.</title>
        <authorList>
            <person name="Sasaki T."/>
            <person name="Matsumoto T."/>
            <person name="Yamamoto K."/>
            <person name="Sakata K."/>
            <person name="Baba T."/>
            <person name="Katayose Y."/>
            <person name="Wu J."/>
            <person name="Niimura Y."/>
            <person name="Cheng Z."/>
            <person name="Nagamura Y."/>
            <person name="Antonio B.A."/>
            <person name="Kanamori H."/>
            <person name="Hosokawa S."/>
            <person name="Masukawa M."/>
            <person name="Arikawa K."/>
            <person name="Chiden Y."/>
            <person name="Hayashi M."/>
            <person name="Okamoto M."/>
            <person name="Ando T."/>
            <person name="Aoki H."/>
            <person name="Arita K."/>
            <person name="Hamada M."/>
            <person name="Harada C."/>
            <person name="Hijishita S."/>
            <person name="Honda M."/>
            <person name="Ichikawa Y."/>
            <person name="Idonuma A."/>
            <person name="Iijima M."/>
            <person name="Ikeda M."/>
            <person name="Ikeno M."/>
            <person name="Ito S."/>
            <person name="Ito T."/>
            <person name="Ito Y."/>
            <person name="Ito Y."/>
            <person name="Iwabuchi A."/>
            <person name="Kamiya K."/>
            <person name="Karasawa W."/>
            <person name="Katagiri S."/>
            <person name="Kikuta A."/>
            <person name="Kobayashi N."/>
            <person name="Kono I."/>
            <person name="Machita K."/>
            <person name="Maehara T."/>
            <person name="Mizuno H."/>
            <person name="Mizubayashi T."/>
            <person name="Mukai Y."/>
            <person name="Nagasaki H."/>
            <person name="Nakashima M."/>
            <person name="Nakama Y."/>
            <person name="Nakamichi Y."/>
            <person name="Nakamura M."/>
            <person name="Namiki N."/>
            <person name="Negishi M."/>
            <person name="Ohta I."/>
            <person name="Ono N."/>
            <person name="Saji S."/>
            <person name="Sakai K."/>
            <person name="Shibata M."/>
            <person name="Shimokawa T."/>
            <person name="Shomura A."/>
            <person name="Song J."/>
            <person name="Takazaki Y."/>
            <person name="Terasawa K."/>
            <person name="Tsuji K."/>
            <person name="Waki K."/>
            <person name="Yamagata H."/>
            <person name="Yamane H."/>
            <person name="Yoshiki S."/>
            <person name="Yoshihara R."/>
            <person name="Yukawa K."/>
            <person name="Zhong H."/>
            <person name="Iwama H."/>
            <person name="Endo T."/>
            <person name="Ito H."/>
            <person name="Hahn J.H."/>
            <person name="Kim H.-I."/>
            <person name="Eun M.-Y."/>
            <person name="Yano M."/>
            <person name="Jiang J."/>
            <person name="Gojobori T."/>
        </authorList>
    </citation>
    <scope>NUCLEOTIDE SEQUENCE [LARGE SCALE GENOMIC DNA]</scope>
    <source>
        <strain>cv. Nipponbare</strain>
    </source>
</reference>
<reference key="3">
    <citation type="journal article" date="2005" name="Nature">
        <title>The map-based sequence of the rice genome.</title>
        <authorList>
            <consortium name="International rice genome sequencing project (IRGSP)"/>
        </authorList>
    </citation>
    <scope>NUCLEOTIDE SEQUENCE [LARGE SCALE GENOMIC DNA]</scope>
    <source>
        <strain>cv. Nipponbare</strain>
    </source>
</reference>
<reference key="4">
    <citation type="journal article" date="2008" name="Nucleic Acids Res.">
        <title>The rice annotation project database (RAP-DB): 2008 update.</title>
        <authorList>
            <consortium name="The rice annotation project (RAP)"/>
        </authorList>
    </citation>
    <scope>GENOME REANNOTATION</scope>
    <source>
        <strain>cv. Nipponbare</strain>
    </source>
</reference>
<reference key="5">
    <citation type="journal article" date="2013" name="Rice">
        <title>Improvement of the Oryza sativa Nipponbare reference genome using next generation sequence and optical map data.</title>
        <authorList>
            <person name="Kawahara Y."/>
            <person name="de la Bastide M."/>
            <person name="Hamilton J.P."/>
            <person name="Kanamori H."/>
            <person name="McCombie W.R."/>
            <person name="Ouyang S."/>
            <person name="Schwartz D.C."/>
            <person name="Tanaka T."/>
            <person name="Wu J."/>
            <person name="Zhou S."/>
            <person name="Childs K.L."/>
            <person name="Davidson R.M."/>
            <person name="Lin H."/>
            <person name="Quesada-Ocampo L."/>
            <person name="Vaillancourt B."/>
            <person name="Sakai H."/>
            <person name="Lee S.S."/>
            <person name="Kim J."/>
            <person name="Numa H."/>
            <person name="Itoh T."/>
            <person name="Buell C.R."/>
            <person name="Matsumoto T."/>
        </authorList>
    </citation>
    <scope>GENOME REANNOTATION</scope>
    <source>
        <strain>cv. Nipponbare</strain>
    </source>
</reference>
<reference key="6">
    <citation type="submission" date="2001-05" db="EMBL/GenBank/DDBJ databases">
        <title>Expression and regulation of genes involved in carbohydrate metabolism in rice.</title>
        <authorList>
            <person name="Lee D.-S."/>
            <person name="Hur Y."/>
        </authorList>
    </citation>
    <scope>NUCLEOTIDE SEQUENCE [MRNA] OF 102-199</scope>
    <source>
        <strain>cv. Stejaree45</strain>
    </source>
</reference>
<reference key="7">
    <citation type="journal article" date="2007" name="J. Plant Physiol.">
        <title>Phylogenetic and expression analysis of sucrose phosphate synthase isozymes in plants.</title>
        <authorList>
            <person name="Lutfiyya L.L."/>
            <person name="Xu N."/>
            <person name="D'Ordine R.L."/>
            <person name="Morrell J.A."/>
            <person name="Miller P.W."/>
            <person name="Duff S.M."/>
        </authorList>
    </citation>
    <scope>GENE FAMILY</scope>
</reference>
<reference key="8">
    <citation type="journal article" date="2011" name="Plant Sci.">
        <title>Tissue specificity and diurnal change in gene expression of the sucrose phosphate synthase gene family in rice.</title>
        <authorList>
            <person name="Okamura M."/>
            <person name="Aoki N."/>
            <person name="Hirose T."/>
            <person name="Yonekura M."/>
            <person name="Ohto C."/>
            <person name="Ohsugi R."/>
        </authorList>
    </citation>
    <scope>TISSUE SPECIFICITY</scope>
    <scope>DEVELOPMENTAL STAGE</scope>
    <scope>INDUCTION</scope>
</reference>
<sequence length="1084" mass="119348">MAGNEWINGYLEAILDSGGAAGGGGGGGGGGGGGGGGGGGGGGGGVDPRSPAAGAASPRGPHMNFNPTHYFVEEVVKGVDESDLHRTWIKVVATRNARERSTRLENMCWRIWHLARKKKQLELEGILRISARRKEQEQVRRETSEDLAEDLFEGEKADTVGELAQQDTPMKKKFQRNFSELTVSWSDENKEKKLYIVLISLHGLVRGDNMELGRDSDTGGQVKYVVELARALAMMPGVYRVDLFTRQVSSPEVDWSYGEPTEMLTSGSTDGEGSGESAGAYIVRIPCGPRDKYLRKEALWPYLQEFVDGALAHILNMSKALGEQVSNGKLVLPYVIHGHYADAGDVAALLSGALNVPMVLTGHSLGRNKLEQIMKQGRMSKEEIDSTYKIMRRIEGEELALDAAELVITSTRQEIDEQWGLYDGFDVKLEKVLRARARRGVSCHGRFMPRMVVIPPGMDFSSVVVPEDTSDGDDGKDFEIASPRSLPPIWAEVMRFLTNPHKPMILALSRPDPKKNITTLVKAFGECRPLRELANLILIMGNRDDIDEMSAGNASVLTTVLKLIDKYDLYGSVAFPKHHKQSDVPEIYRLTGKMKGVFINPALVEPFGLTLIEAAAHGLPIVATKNGGPVDIKNALNNGLLVDPHDQHAIADALLKLVADKNLWQECRKNGLRNIQLYSWPEHCRTYLTRIAGCRIRNPRWLMDTPADAAAEEEEALEDSLMDVQDLSLRLSIDGERGSSMNDAPSSDPQDSVQRIMNKIKRSSPADTDGAKIPAEAAATATSGAMNKYPLLRRRRRLFVIAVDCYGDDGSASKRMLQVIQEVFRAVRSDSQMSRISGFALSTAMPLPETLKLLQLGKIPPTDFDALICGSGSEVYYPSTAQCVDAGGRLRPDQDYLLHINHRWSHDGAKQTIAKLAHDGSGTNVEPDVESCNPHCVSFFIKDPNKVRTIDEMRERVRMRGLRCHLMYCRNATRLQVVPLLASRSQALRYLFVRWGLSVGNMYLIVGEHGDTDHEEMLSGLHKTVIIRGVTEKGSEQLVRSSGSYQREDVVPSESPLIAFTKGDLKADEIMRALKEVTKAASGM</sequence>
<comment type="function">
    <text evidence="1">Plays a role in photosynthetic sucrose synthesis by catalyzing the rate-limiting step of sucrose biosynthesis from UDP-glucose and fructose- 6-phosphate. Involved in the regulation of carbon partitioning in the leaves of plants. May regulate the synthesis of sucrose and therefore play a major role as a limiting factor in the export of photoassimilates out of the leaf. Plays a role for sucrose availability that is essential for plant growth and fiber elongation (By similarity).</text>
</comment>
<comment type="catalytic activity">
    <reaction>
        <text>beta-D-fructose 6-phosphate + UDP-alpha-D-glucose = sucrose 6(F)-phosphate + UDP + H(+)</text>
        <dbReference type="Rhea" id="RHEA:22172"/>
        <dbReference type="ChEBI" id="CHEBI:15378"/>
        <dbReference type="ChEBI" id="CHEBI:57634"/>
        <dbReference type="ChEBI" id="CHEBI:57723"/>
        <dbReference type="ChEBI" id="CHEBI:58223"/>
        <dbReference type="ChEBI" id="CHEBI:58885"/>
        <dbReference type="EC" id="2.4.1.14"/>
    </reaction>
</comment>
<comment type="activity regulation">
    <text evidence="1">Activity is regulated by phosphorylation and moderated by concentration of metabolites and light.</text>
</comment>
<comment type="pathway">
    <text>Glycan biosynthesis; sucrose biosynthesis; sucrose from D-fructose 6-phosphate and UDP-alpha-D-glucose: step 1/2.</text>
</comment>
<comment type="subunit">
    <text evidence="1">Homodimer or homotetramer.</text>
</comment>
<comment type="tissue specificity">
    <text evidence="3">Expressed in germinating seeds.</text>
</comment>
<comment type="developmental stage">
    <text evidence="3">Highly expressed in source leaves and at low levels in sink leaves.</text>
</comment>
<comment type="induction">
    <text evidence="3">Circadian-regulated, with the highest expression 1 hour before the beginning of light period (in 14 hours light/10 hours dark cycle).</text>
</comment>
<comment type="similarity">
    <text evidence="4">Belongs to the glycosyltransferase 1 family.</text>
</comment>
<comment type="sequence caution" evidence="4">
    <conflict type="erroneous gene model prediction">
        <sequence resource="EMBL-CDS" id="BAF07124"/>
    </conflict>
</comment>
<proteinExistence type="evidence at transcript level"/>
<protein>
    <recommendedName>
        <fullName>Probable sucrose-phosphate synthase 1</fullName>
        <ecNumber>2.4.1.14</ecNumber>
    </recommendedName>
    <alternativeName>
        <fullName>Sucrose phosphate synthase 1F</fullName>
        <shortName>OsSPS1F</shortName>
    </alternativeName>
    <alternativeName>
        <fullName>UDP-glucose-fructose-phosphate glucosyltransferase</fullName>
    </alternativeName>
</protein>
<name>SPSA1_ORYSJ</name>
<accession>Q0JGK4</accession>
<accession>Q43010</accession>
<accession>Q43802</accession>
<accession>Q5JLN3</accession>
<accession>Q94JN0</accession>
<keyword id="KW-0328">Glycosyltransferase</keyword>
<keyword id="KW-1185">Reference proteome</keyword>
<keyword id="KW-0808">Transferase</keyword>
<evidence type="ECO:0000250" key="1"/>
<evidence type="ECO:0000256" key="2">
    <source>
        <dbReference type="SAM" id="MobiDB-lite"/>
    </source>
</evidence>
<evidence type="ECO:0000269" key="3">
    <source>
    </source>
</evidence>
<evidence type="ECO:0000305" key="4"/>
<dbReference type="EC" id="2.4.1.14"/>
<dbReference type="EMBL" id="D45890">
    <property type="protein sequence ID" value="BAA08304.1"/>
    <property type="molecule type" value="Genomic_DNA"/>
</dbReference>
<dbReference type="EMBL" id="AP003437">
    <property type="protein sequence ID" value="BAD87626.1"/>
    <property type="molecule type" value="Genomic_DNA"/>
</dbReference>
<dbReference type="EMBL" id="AP008207">
    <property type="protein sequence ID" value="BAF07124.1"/>
    <property type="status" value="ALT_SEQ"/>
    <property type="molecule type" value="Genomic_DNA"/>
</dbReference>
<dbReference type="EMBL" id="AP014957">
    <property type="status" value="NOT_ANNOTATED_CDS"/>
    <property type="molecule type" value="Genomic_DNA"/>
</dbReference>
<dbReference type="EMBL" id="AF378184">
    <property type="protein sequence ID" value="AAK54855.1"/>
    <property type="molecule type" value="mRNA"/>
</dbReference>
<dbReference type="PIR" id="T04103">
    <property type="entry name" value="T04103"/>
</dbReference>
<dbReference type="SMR" id="Q0JGK4"/>
<dbReference type="FunCoup" id="Q0JGK4">
    <property type="interactions" value="149"/>
</dbReference>
<dbReference type="STRING" id="39947.Q0JGK4"/>
<dbReference type="CAZy" id="GT4">
    <property type="family name" value="Glycosyltransferase Family 4"/>
</dbReference>
<dbReference type="PaxDb" id="39947-Q0JGK4"/>
<dbReference type="EnsemblPlants" id="Os01t0919400-01">
    <property type="protein sequence ID" value="Os01t0919400-01"/>
    <property type="gene ID" value="Os01g0919400"/>
</dbReference>
<dbReference type="GeneID" id="4324364"/>
<dbReference type="Gramene" id="Os01t0919400-01">
    <property type="protein sequence ID" value="Os01t0919400-01"/>
    <property type="gene ID" value="Os01g0919400"/>
</dbReference>
<dbReference type="KEGG" id="dosa:Os01g0919400"/>
<dbReference type="KEGG" id="osa:4324364"/>
<dbReference type="eggNOG" id="KOG0853">
    <property type="taxonomic scope" value="Eukaryota"/>
</dbReference>
<dbReference type="InParanoid" id="Q0JGK4"/>
<dbReference type="OrthoDB" id="512920at2759"/>
<dbReference type="BRENDA" id="2.4.1.14">
    <property type="organism ID" value="8948"/>
</dbReference>
<dbReference type="PlantReactome" id="R-OSA-1119465">
    <property type="pathway name" value="Sucrose biosynthesis"/>
</dbReference>
<dbReference type="UniPathway" id="UPA00371">
    <property type="reaction ID" value="UER00545"/>
</dbReference>
<dbReference type="Proteomes" id="UP000000763">
    <property type="component" value="Chromosome 1"/>
</dbReference>
<dbReference type="Proteomes" id="UP000059680">
    <property type="component" value="Chromosome 1"/>
</dbReference>
<dbReference type="GO" id="GO:0005794">
    <property type="term" value="C:Golgi apparatus"/>
    <property type="evidence" value="ECO:0007669"/>
    <property type="project" value="EnsemblPlants"/>
</dbReference>
<dbReference type="GO" id="GO:0046524">
    <property type="term" value="F:sucrose-phosphate synthase activity"/>
    <property type="evidence" value="ECO:0007669"/>
    <property type="project" value="UniProtKB-EC"/>
</dbReference>
<dbReference type="GO" id="GO:0005986">
    <property type="term" value="P:sucrose biosynthetic process"/>
    <property type="evidence" value="ECO:0007669"/>
    <property type="project" value="UniProtKB-UniPathway"/>
</dbReference>
<dbReference type="CDD" id="cd03800">
    <property type="entry name" value="GT4_sucrose_synthase"/>
    <property type="match status" value="1"/>
</dbReference>
<dbReference type="CDD" id="cd16419">
    <property type="entry name" value="HAD_SPS"/>
    <property type="match status" value="1"/>
</dbReference>
<dbReference type="Gene3D" id="3.40.50.2000">
    <property type="entry name" value="Glycogen Phosphorylase B"/>
    <property type="match status" value="2"/>
</dbReference>
<dbReference type="InterPro" id="IPR001296">
    <property type="entry name" value="Glyco_trans_1"/>
</dbReference>
<dbReference type="InterPro" id="IPR006380">
    <property type="entry name" value="SPP-like_dom"/>
</dbReference>
<dbReference type="InterPro" id="IPR044161">
    <property type="entry name" value="SPS"/>
</dbReference>
<dbReference type="InterPro" id="IPR035659">
    <property type="entry name" value="SPS_C"/>
</dbReference>
<dbReference type="InterPro" id="IPR012819">
    <property type="entry name" value="SPS_pln"/>
</dbReference>
<dbReference type="InterPro" id="IPR000368">
    <property type="entry name" value="Sucrose_synth_GT-B1"/>
</dbReference>
<dbReference type="NCBIfam" id="TIGR02468">
    <property type="entry name" value="sucrsPsyn_pln"/>
    <property type="match status" value="1"/>
</dbReference>
<dbReference type="PANTHER" id="PTHR46039">
    <property type="entry name" value="SUCROSE-PHOSPHATE SYNTHASE 3-RELATED"/>
    <property type="match status" value="1"/>
</dbReference>
<dbReference type="PANTHER" id="PTHR46039:SF5">
    <property type="entry name" value="SUCROSE-PHOSPHATE SYNTHASE 3-RELATED"/>
    <property type="match status" value="1"/>
</dbReference>
<dbReference type="Pfam" id="PF00534">
    <property type="entry name" value="Glycos_transf_1"/>
    <property type="match status" value="1"/>
</dbReference>
<dbReference type="Pfam" id="PF00862">
    <property type="entry name" value="GT-B_Sucrose_synth"/>
    <property type="match status" value="1"/>
</dbReference>
<dbReference type="Pfam" id="PF05116">
    <property type="entry name" value="S6PP"/>
    <property type="match status" value="1"/>
</dbReference>
<dbReference type="SUPFAM" id="SSF53756">
    <property type="entry name" value="UDP-Glycosyltransferase/glycogen phosphorylase"/>
    <property type="match status" value="1"/>
</dbReference>